<protein>
    <recommendedName>
        <fullName evidence="8">1,4-beta-D-glucan cellobiohydrolase CEL6C</fullName>
        <ecNumber evidence="6">3.2.1.91</ecNumber>
    </recommendedName>
    <alternativeName>
        <fullName evidence="8">Beta-glucancellobiohydrolase CEL6C</fullName>
    </alternativeName>
    <alternativeName>
        <fullName evidence="8">Exocellobiohydrolase CEL6C</fullName>
    </alternativeName>
    <alternativeName>
        <fullName evidence="8">Exoglucanase CEL6C</fullName>
    </alternativeName>
</protein>
<sequence length="398" mass="42570">MKITSSAAALALVASAVAAPSPTTQDKPTKRQAGCASAVSLNAQTNVFKQYTLHANNFYRKEIEELAIPNLSDPSLEAAARKVADTGSFVWLDTIANVDRLEPALAEVPCNEILGVVVYDLPGRDCAAKASNGELKVGELNRYKTEFIDRIASILKAHPNTAVALVIEPDSLPNLVTNSDVQACRNSAAGYRDGVAYALKTLNLPNVVQYIDAGHGGWLGWDANLKPGAEELAKAYKAAGSPKQFRGIATNVAGWNAWDLSPGEFSSASDAKYNSCQNERTYVNTFGQRLKAAGMPNHAIVDTGRNGVQGLREEWGNWCNVDGAGFGRPPSADTGLELADAFVWVKPGGESDGTSDSSAVRYDSFCGKPDAFQPSPEAGAWHQEYFEMLLRNSNPSLL</sequence>
<feature type="signal peptide" evidence="2">
    <location>
        <begin position="1"/>
        <end position="18"/>
    </location>
</feature>
<feature type="chain" id="PRO_5001338839" description="1,4-beta-D-glucan cellobiohydrolase CEL6C">
    <location>
        <begin position="19"/>
        <end position="398"/>
    </location>
</feature>
<feature type="active site" evidence="4">
    <location>
        <position position="125"/>
    </location>
</feature>
<feature type="active site" description="Proton donor" evidence="5">
    <location>
        <position position="170"/>
    </location>
</feature>
<feature type="binding site" evidence="1">
    <location>
        <position position="218"/>
    </location>
    <ligand>
        <name>substrate</name>
    </ligand>
</feature>
<feature type="binding site" evidence="1">
    <location>
        <position position="318"/>
    </location>
    <ligand>
        <name>substrate</name>
    </ligand>
</feature>
<feature type="binding site" evidence="1">
    <location>
        <position position="346"/>
    </location>
    <ligand>
        <name>substrate</name>
    </ligand>
</feature>
<feature type="binding site" evidence="1">
    <location>
        <position position="350"/>
    </location>
    <ligand>
        <name>substrate</name>
    </ligand>
</feature>
<feature type="glycosylation site" description="N-linked (GlcNAc...) asparagine" evidence="3">
    <location>
        <position position="70"/>
    </location>
</feature>
<evidence type="ECO:0000250" key="1">
    <source>
        <dbReference type="UniProtKB" id="Q9C1S9"/>
    </source>
</evidence>
<evidence type="ECO:0000255" key="2"/>
<evidence type="ECO:0000255" key="3">
    <source>
        <dbReference type="PROSITE-ProRule" id="PRU00498"/>
    </source>
</evidence>
<evidence type="ECO:0000255" key="4">
    <source>
        <dbReference type="PROSITE-ProRule" id="PRU10056"/>
    </source>
</evidence>
<evidence type="ECO:0000255" key="5">
    <source>
        <dbReference type="PROSITE-ProRule" id="PRU10057"/>
    </source>
</evidence>
<evidence type="ECO:0000269" key="6">
    <source>
    </source>
</evidence>
<evidence type="ECO:0000303" key="7">
    <source>
    </source>
</evidence>
<evidence type="ECO:0000305" key="8"/>
<name>CEL6C_PODAN</name>
<organism>
    <name type="scientific">Podospora anserina (strain S / ATCC MYA-4624 / DSM 980 / FGSC 10383)</name>
    <name type="common">Pleurage anserina</name>
    <dbReference type="NCBI Taxonomy" id="515849"/>
    <lineage>
        <taxon>Eukaryota</taxon>
        <taxon>Fungi</taxon>
        <taxon>Dikarya</taxon>
        <taxon>Ascomycota</taxon>
        <taxon>Pezizomycotina</taxon>
        <taxon>Sordariomycetes</taxon>
        <taxon>Sordariomycetidae</taxon>
        <taxon>Sordariales</taxon>
        <taxon>Podosporaceae</taxon>
        <taxon>Podospora</taxon>
        <taxon>Podospora anserina</taxon>
    </lineage>
</organism>
<keyword id="KW-0119">Carbohydrate metabolism</keyword>
<keyword id="KW-0136">Cellulose degradation</keyword>
<keyword id="KW-0325">Glycoprotein</keyword>
<keyword id="KW-0326">Glycosidase</keyword>
<keyword id="KW-0378">Hydrolase</keyword>
<keyword id="KW-0624">Polysaccharide degradation</keyword>
<keyword id="KW-1185">Reference proteome</keyword>
<keyword id="KW-0964">Secreted</keyword>
<keyword id="KW-0732">Signal</keyword>
<dbReference type="EC" id="3.2.1.91" evidence="6"/>
<dbReference type="EMBL" id="CU633455">
    <property type="protein sequence ID" value="CAP61669.1"/>
    <property type="molecule type" value="Genomic_DNA"/>
</dbReference>
<dbReference type="EMBL" id="FO904939">
    <property type="protein sequence ID" value="CDP28020.1"/>
    <property type="molecule type" value="Genomic_DNA"/>
</dbReference>
<dbReference type="RefSeq" id="XP_001903893.1">
    <property type="nucleotide sequence ID" value="XM_001903858.1"/>
</dbReference>
<dbReference type="SMR" id="B2AE04"/>
<dbReference type="STRING" id="515849.B2AE04"/>
<dbReference type="CAZy" id="GH6">
    <property type="family name" value="Glycoside Hydrolase Family 6"/>
</dbReference>
<dbReference type="GlyCosmos" id="B2AE04">
    <property type="glycosylation" value="1 site, No reported glycans"/>
</dbReference>
<dbReference type="GeneID" id="6188027"/>
<dbReference type="KEGG" id="pan:PODANSg909"/>
<dbReference type="VEuPathDB" id="FungiDB:PODANS_4_2420"/>
<dbReference type="eggNOG" id="ENOG502QWHE">
    <property type="taxonomic scope" value="Eukaryota"/>
</dbReference>
<dbReference type="HOGENOM" id="CLU_015488_0_0_1"/>
<dbReference type="InParanoid" id="B2AE04"/>
<dbReference type="OrthoDB" id="64893at2759"/>
<dbReference type="Proteomes" id="UP000001197">
    <property type="component" value="Chromosome 4"/>
</dbReference>
<dbReference type="GO" id="GO:0005576">
    <property type="term" value="C:extracellular region"/>
    <property type="evidence" value="ECO:0007669"/>
    <property type="project" value="UniProtKB-SubCell"/>
</dbReference>
<dbReference type="GO" id="GO:0016162">
    <property type="term" value="F:cellulose 1,4-beta-cellobiosidase activity"/>
    <property type="evidence" value="ECO:0007669"/>
    <property type="project" value="UniProtKB-EC"/>
</dbReference>
<dbReference type="GO" id="GO:0030245">
    <property type="term" value="P:cellulose catabolic process"/>
    <property type="evidence" value="ECO:0007669"/>
    <property type="project" value="UniProtKB-KW"/>
</dbReference>
<dbReference type="FunFam" id="3.20.20.40:FF:000001">
    <property type="entry name" value="Glucanase"/>
    <property type="match status" value="1"/>
</dbReference>
<dbReference type="Gene3D" id="3.20.20.40">
    <property type="entry name" value="1, 4-beta cellobiohydrolase"/>
    <property type="match status" value="1"/>
</dbReference>
<dbReference type="InterPro" id="IPR016288">
    <property type="entry name" value="Beta_cellobiohydrolase"/>
</dbReference>
<dbReference type="InterPro" id="IPR036434">
    <property type="entry name" value="Beta_cellobiohydrolase_sf"/>
</dbReference>
<dbReference type="InterPro" id="IPR001524">
    <property type="entry name" value="Glyco_hydro_6_CS"/>
</dbReference>
<dbReference type="PANTHER" id="PTHR34876">
    <property type="match status" value="1"/>
</dbReference>
<dbReference type="PANTHER" id="PTHR34876:SF2">
    <property type="entry name" value="GLUCANASE"/>
    <property type="match status" value="1"/>
</dbReference>
<dbReference type="Pfam" id="PF01341">
    <property type="entry name" value="Glyco_hydro_6"/>
    <property type="match status" value="1"/>
</dbReference>
<dbReference type="PIRSF" id="PIRSF001100">
    <property type="entry name" value="Beta_cellobiohydrolase"/>
    <property type="match status" value="1"/>
</dbReference>
<dbReference type="PRINTS" id="PR00733">
    <property type="entry name" value="GLHYDRLASE6"/>
</dbReference>
<dbReference type="SUPFAM" id="SSF51989">
    <property type="entry name" value="Glycosyl hydrolases family 6, cellulases"/>
    <property type="match status" value="1"/>
</dbReference>
<dbReference type="PROSITE" id="PS00655">
    <property type="entry name" value="GLYCOSYL_HYDROL_F6_1"/>
    <property type="match status" value="1"/>
</dbReference>
<dbReference type="PROSITE" id="PS00656">
    <property type="entry name" value="GLYCOSYL_HYDROL_F6_2"/>
    <property type="match status" value="1"/>
</dbReference>
<comment type="function">
    <text evidence="6">Exoglucanase that plays an important function in biomass degradation by catalyzing the hydrolysis of the non-reducing end beta-1,4-glucosidic linkages in cellulose and cellotetraose to release cellobiose. Hydrolyzes crystalline and amorphous cellulose but is inactive on hydroxyethyl cellulose, mannan, galactomannan, xyloglucan, arabinoxylan, arabinan, xylan, and pectin.</text>
</comment>
<comment type="catalytic activity">
    <reaction evidence="6">
        <text>Hydrolysis of (1-&gt;4)-beta-D-glucosidic linkages in cellulose and cellotetraose, releasing cellobiose from the non-reducing ends of the chains.</text>
        <dbReference type="EC" id="3.2.1.91"/>
    </reaction>
</comment>
<comment type="biophysicochemical properties">
    <kinetics>
        <KM evidence="6">0.59 uM for cellotetraose</KM>
    </kinetics>
    <phDependence>
        <text evidence="6">Optimum pH is 6.</text>
    </phDependence>
    <temperatureDependence>
        <text evidence="6">Optimum temperature is 35 degrees Celsius.</text>
    </temperatureDependence>
</comment>
<comment type="subcellular location">
    <subcellularLocation>
        <location evidence="8">Secreted</location>
    </subcellularLocation>
</comment>
<comment type="PTM">
    <text evidence="6">Both N- and O-glycosylated.</text>
</comment>
<comment type="similarity">
    <text evidence="8">Belongs to the glycosyl hydrolase 6 (cellulase B) family.</text>
</comment>
<proteinExistence type="evidence at protein level"/>
<reference key="1">
    <citation type="journal article" date="2008" name="Genome Biol.">
        <title>The genome sequence of the model ascomycete fungus Podospora anserina.</title>
        <authorList>
            <person name="Espagne E."/>
            <person name="Lespinet O."/>
            <person name="Malagnac F."/>
            <person name="Da Silva C."/>
            <person name="Jaillon O."/>
            <person name="Porcel B.M."/>
            <person name="Couloux A."/>
            <person name="Aury J.-M."/>
            <person name="Segurens B."/>
            <person name="Poulain J."/>
            <person name="Anthouard V."/>
            <person name="Grossetete S."/>
            <person name="Khalili H."/>
            <person name="Coppin E."/>
            <person name="Dequard-Chablat M."/>
            <person name="Picard M."/>
            <person name="Contamine V."/>
            <person name="Arnaise S."/>
            <person name="Bourdais A."/>
            <person name="Berteaux-Lecellier V."/>
            <person name="Gautheret D."/>
            <person name="de Vries R.P."/>
            <person name="Battaglia E."/>
            <person name="Coutinho P.M."/>
            <person name="Danchin E.G.J."/>
            <person name="Henrissat B."/>
            <person name="El Khoury R."/>
            <person name="Sainsard-Chanet A."/>
            <person name="Boivin A."/>
            <person name="Pinan-Lucarre B."/>
            <person name="Sellem C.H."/>
            <person name="Debuchy R."/>
            <person name="Wincker P."/>
            <person name="Weissenbach J."/>
            <person name="Silar P."/>
        </authorList>
    </citation>
    <scope>NUCLEOTIDE SEQUENCE [LARGE SCALE GENOMIC DNA]</scope>
    <source>
        <strain>S / ATCC MYA-4624 / DSM 980 / FGSC 10383</strain>
    </source>
</reference>
<reference key="2">
    <citation type="journal article" date="2014" name="Genetics">
        <title>Maintaining two mating types: Structure of the mating type locus and its role in heterokaryosis in Podospora anserina.</title>
        <authorList>
            <person name="Grognet P."/>
            <person name="Bidard F."/>
            <person name="Kuchly C."/>
            <person name="Tong L.C.H."/>
            <person name="Coppin E."/>
            <person name="Benkhali J.A."/>
            <person name="Couloux A."/>
            <person name="Wincker P."/>
            <person name="Debuchy R."/>
            <person name="Silar P."/>
        </authorList>
    </citation>
    <scope>GENOME REANNOTATION</scope>
    <source>
        <strain>S / ATCC MYA-4624 / DSM 980 / FGSC 10383</strain>
    </source>
</reference>
<reference key="3">
    <citation type="journal article" date="2013" name="Appl. Environ. Microbiol.">
        <title>Insights into exo- and endoglucanase activities of family 6 glycoside hydrolases from Podospora anserina.</title>
        <authorList>
            <person name="Poidevin L."/>
            <person name="Feliu J."/>
            <person name="Doan A."/>
            <person name="Berrin J.G."/>
            <person name="Bey M."/>
            <person name="Coutinho P.M."/>
            <person name="Henrissat B."/>
            <person name="Record E."/>
            <person name="Heiss-Blanquet S."/>
        </authorList>
    </citation>
    <scope>FUNCTION</scope>
    <scope>CATALYTIC ACTIVITY</scope>
    <scope>BIOPHYSICOCHEMICAL PROPERTIES</scope>
    <scope>GLYCOSYLATION</scope>
</reference>
<gene>
    <name evidence="7" type="primary">CEL6C</name>
    <name type="ordered locus">Pa_4_2420</name>
    <name type="ORF">PODANS_4_2420</name>
</gene>
<accession>B2AE04</accession>